<keyword id="KW-0131">Cell cycle</keyword>
<keyword id="KW-0132">Cell division</keyword>
<keyword id="KW-0159">Chromosome partition</keyword>
<keyword id="KW-0963">Cytoplasm</keyword>
<keyword id="KW-1185">Reference proteome</keyword>
<evidence type="ECO:0000255" key="1">
    <source>
        <dbReference type="HAMAP-Rule" id="MF_01804"/>
    </source>
</evidence>
<gene>
    <name evidence="1" type="primary">scpB</name>
    <name type="ordered locus">SERP1057</name>
</gene>
<sequence length="180" mass="20221">MDNIAILEALLYTSGDEGLEQKQIIDILDINLNQLEDLVSKYHSHGLTIQRYGSTYVLTTKKETSTYIEQLVKEKSKMKLSQAAMETLSIIAYNQPLTRGDIEMIRGINSDGAVKTLIARGLVEAKDVDHSRSHHLITTDLFLNVFGIENLDALPTTEEDEAEMDEFFSNLVNQKGESNE</sequence>
<organism>
    <name type="scientific">Staphylococcus epidermidis (strain ATCC 35984 / DSM 28319 / BCRC 17069 / CCUG 31568 / BM 3577 / RP62A)</name>
    <dbReference type="NCBI Taxonomy" id="176279"/>
    <lineage>
        <taxon>Bacteria</taxon>
        <taxon>Bacillati</taxon>
        <taxon>Bacillota</taxon>
        <taxon>Bacilli</taxon>
        <taxon>Bacillales</taxon>
        <taxon>Staphylococcaceae</taxon>
        <taxon>Staphylococcus</taxon>
    </lineage>
</organism>
<reference key="1">
    <citation type="journal article" date="2005" name="J. Bacteriol.">
        <title>Insights on evolution of virulence and resistance from the complete genome analysis of an early methicillin-resistant Staphylococcus aureus strain and a biofilm-producing methicillin-resistant Staphylococcus epidermidis strain.</title>
        <authorList>
            <person name="Gill S.R."/>
            <person name="Fouts D.E."/>
            <person name="Archer G.L."/>
            <person name="Mongodin E.F."/>
            <person name="DeBoy R.T."/>
            <person name="Ravel J."/>
            <person name="Paulsen I.T."/>
            <person name="Kolonay J.F."/>
            <person name="Brinkac L.M."/>
            <person name="Beanan M.J."/>
            <person name="Dodson R.J."/>
            <person name="Daugherty S.C."/>
            <person name="Madupu R."/>
            <person name="Angiuoli S.V."/>
            <person name="Durkin A.S."/>
            <person name="Haft D.H."/>
            <person name="Vamathevan J.J."/>
            <person name="Khouri H."/>
            <person name="Utterback T.R."/>
            <person name="Lee C."/>
            <person name="Dimitrov G."/>
            <person name="Jiang L."/>
            <person name="Qin H."/>
            <person name="Weidman J."/>
            <person name="Tran K."/>
            <person name="Kang K.H."/>
            <person name="Hance I.R."/>
            <person name="Nelson K.E."/>
            <person name="Fraser C.M."/>
        </authorList>
    </citation>
    <scope>NUCLEOTIDE SEQUENCE [LARGE SCALE GENOMIC DNA]</scope>
    <source>
        <strain>ATCC 35984 / DSM 28319 / BCRC 17069 / CCUG 31568 / BM 3577 / RP62A</strain>
    </source>
</reference>
<accession>Q5HP56</accession>
<comment type="function">
    <text evidence="1">Participates in chromosomal partition during cell division. May act via the formation of a condensin-like complex containing Smc and ScpA that pull DNA away from mid-cell into both cell halves.</text>
</comment>
<comment type="subunit">
    <text evidence="1">Homodimer. Homodimerization may be required to stabilize the binding of ScpA to the Smc head domains. Component of a cohesin-like complex composed of ScpA, ScpB and the Smc homodimer, in which ScpA and ScpB bind to the head domain of Smc. The presence of the three proteins is required for the association of the complex with DNA.</text>
</comment>
<comment type="subcellular location">
    <subcellularLocation>
        <location evidence="1">Cytoplasm</location>
    </subcellularLocation>
    <text evidence="1">Associated with two foci at the outer edges of the nucleoid region in young cells, and at four foci within both cell halves in older cells.</text>
</comment>
<comment type="similarity">
    <text evidence="1">Belongs to the ScpB family.</text>
</comment>
<dbReference type="EMBL" id="CP000029">
    <property type="protein sequence ID" value="AAW54407.1"/>
    <property type="molecule type" value="Genomic_DNA"/>
</dbReference>
<dbReference type="RefSeq" id="WP_001830975.1">
    <property type="nucleotide sequence ID" value="NC_002976.3"/>
</dbReference>
<dbReference type="SMR" id="Q5HP56"/>
<dbReference type="STRING" id="176279.SERP1057"/>
<dbReference type="GeneID" id="50018703"/>
<dbReference type="KEGG" id="ser:SERP1057"/>
<dbReference type="eggNOG" id="COG1386">
    <property type="taxonomic scope" value="Bacteria"/>
</dbReference>
<dbReference type="HOGENOM" id="CLU_045647_5_3_9"/>
<dbReference type="Proteomes" id="UP000000531">
    <property type="component" value="Chromosome"/>
</dbReference>
<dbReference type="GO" id="GO:0005737">
    <property type="term" value="C:cytoplasm"/>
    <property type="evidence" value="ECO:0007669"/>
    <property type="project" value="UniProtKB-SubCell"/>
</dbReference>
<dbReference type="GO" id="GO:0051301">
    <property type="term" value="P:cell division"/>
    <property type="evidence" value="ECO:0007669"/>
    <property type="project" value="UniProtKB-KW"/>
</dbReference>
<dbReference type="GO" id="GO:0051304">
    <property type="term" value="P:chromosome separation"/>
    <property type="evidence" value="ECO:0007669"/>
    <property type="project" value="InterPro"/>
</dbReference>
<dbReference type="GO" id="GO:0006260">
    <property type="term" value="P:DNA replication"/>
    <property type="evidence" value="ECO:0007669"/>
    <property type="project" value="UniProtKB-UniRule"/>
</dbReference>
<dbReference type="Gene3D" id="1.10.10.10">
    <property type="entry name" value="Winged helix-like DNA-binding domain superfamily/Winged helix DNA-binding domain"/>
    <property type="match status" value="2"/>
</dbReference>
<dbReference type="HAMAP" id="MF_01804">
    <property type="entry name" value="ScpB"/>
    <property type="match status" value="1"/>
</dbReference>
<dbReference type="InterPro" id="IPR005234">
    <property type="entry name" value="ScpB_csome_segregation"/>
</dbReference>
<dbReference type="InterPro" id="IPR036388">
    <property type="entry name" value="WH-like_DNA-bd_sf"/>
</dbReference>
<dbReference type="InterPro" id="IPR036390">
    <property type="entry name" value="WH_DNA-bd_sf"/>
</dbReference>
<dbReference type="NCBIfam" id="TIGR00281">
    <property type="entry name" value="SMC-Scp complex subunit ScpB"/>
    <property type="match status" value="1"/>
</dbReference>
<dbReference type="PANTHER" id="PTHR34298">
    <property type="entry name" value="SEGREGATION AND CONDENSATION PROTEIN B"/>
    <property type="match status" value="1"/>
</dbReference>
<dbReference type="PANTHER" id="PTHR34298:SF2">
    <property type="entry name" value="SEGREGATION AND CONDENSATION PROTEIN B"/>
    <property type="match status" value="1"/>
</dbReference>
<dbReference type="Pfam" id="PF04079">
    <property type="entry name" value="SMC_ScpB"/>
    <property type="match status" value="1"/>
</dbReference>
<dbReference type="PIRSF" id="PIRSF019345">
    <property type="entry name" value="ScpB"/>
    <property type="match status" value="1"/>
</dbReference>
<dbReference type="SUPFAM" id="SSF46785">
    <property type="entry name" value="Winged helix' DNA-binding domain"/>
    <property type="match status" value="2"/>
</dbReference>
<proteinExistence type="inferred from homology"/>
<protein>
    <recommendedName>
        <fullName evidence="1">Segregation and condensation protein B</fullName>
    </recommendedName>
</protein>
<name>SCPB_STAEQ</name>
<feature type="chain" id="PRO_0000211152" description="Segregation and condensation protein B">
    <location>
        <begin position="1"/>
        <end position="180"/>
    </location>
</feature>